<feature type="chain" id="PRO_0000062589" description="Ribulose bisphosphate carboxylase large chain">
    <location>
        <begin position="1" status="less than"/>
        <end position="471"/>
    </location>
</feature>
<feature type="active site" description="Proton acceptor" evidence="1">
    <location>
        <position position="166"/>
    </location>
</feature>
<feature type="active site" description="Proton acceptor" evidence="1">
    <location>
        <position position="285"/>
    </location>
</feature>
<feature type="binding site" description="in homodimeric partner" evidence="1">
    <location>
        <position position="114"/>
    </location>
    <ligand>
        <name>substrate</name>
    </ligand>
</feature>
<feature type="binding site" evidence="1">
    <location>
        <position position="164"/>
    </location>
    <ligand>
        <name>substrate</name>
    </ligand>
</feature>
<feature type="binding site" evidence="1">
    <location>
        <position position="168"/>
    </location>
    <ligand>
        <name>substrate</name>
    </ligand>
</feature>
<feature type="binding site" description="via carbamate group" evidence="1">
    <location>
        <position position="192"/>
    </location>
    <ligand>
        <name>Mg(2+)</name>
        <dbReference type="ChEBI" id="CHEBI:18420"/>
    </ligand>
</feature>
<feature type="binding site" evidence="1">
    <location>
        <position position="194"/>
    </location>
    <ligand>
        <name>Mg(2+)</name>
        <dbReference type="ChEBI" id="CHEBI:18420"/>
    </ligand>
</feature>
<feature type="binding site" evidence="1">
    <location>
        <position position="195"/>
    </location>
    <ligand>
        <name>Mg(2+)</name>
        <dbReference type="ChEBI" id="CHEBI:18420"/>
    </ligand>
</feature>
<feature type="binding site" evidence="1">
    <location>
        <position position="286"/>
    </location>
    <ligand>
        <name>substrate</name>
    </ligand>
</feature>
<feature type="binding site" evidence="1">
    <location>
        <position position="318"/>
    </location>
    <ligand>
        <name>substrate</name>
    </ligand>
</feature>
<feature type="binding site" evidence="1">
    <location>
        <position position="370"/>
    </location>
    <ligand>
        <name>substrate</name>
    </ligand>
</feature>
<feature type="site" description="Transition state stabilizer" evidence="1">
    <location>
        <position position="325"/>
    </location>
</feature>
<feature type="modified residue" description="N6,N6,N6-trimethyllysine" evidence="1">
    <location>
        <position position="5"/>
    </location>
</feature>
<feature type="modified residue" description="N6-carboxylysine" evidence="1">
    <location>
        <position position="192"/>
    </location>
</feature>
<feature type="disulfide bond" description="Interchain; in linked form" evidence="1">
    <location>
        <position position="238"/>
    </location>
</feature>
<feature type="non-terminal residue">
    <location>
        <position position="1"/>
    </location>
</feature>
<geneLocation type="chloroplast"/>
<organism>
    <name type="scientific">Schlumbergera truncata</name>
    <name type="common">Thanksgiving cactus</name>
    <name type="synonym">Epiphyllum truncatum</name>
    <dbReference type="NCBI Taxonomy" id="3595"/>
    <lineage>
        <taxon>Eukaryota</taxon>
        <taxon>Viridiplantae</taxon>
        <taxon>Streptophyta</taxon>
        <taxon>Embryophyta</taxon>
        <taxon>Tracheophyta</taxon>
        <taxon>Spermatophyta</taxon>
        <taxon>Magnoliopsida</taxon>
        <taxon>eudicotyledons</taxon>
        <taxon>Gunneridae</taxon>
        <taxon>Pentapetalae</taxon>
        <taxon>Caryophyllales</taxon>
        <taxon>Cactineae</taxon>
        <taxon>Cactaceae</taxon>
        <taxon>Cactoideae</taxon>
        <taxon>Rhipsalideae</taxon>
        <taxon>Schlumbergera</taxon>
    </lineage>
</organism>
<evidence type="ECO:0000255" key="1">
    <source>
        <dbReference type="HAMAP-Rule" id="MF_01338"/>
    </source>
</evidence>
<sequence length="471" mass="51985">SVGFKAGVKDYKLTYYTPEYQPQDTDILAAFRVTPQPGVPSEEAGAAVAAESSTGTWTTVWTDGLTSLDRYKGRCYHIDAVPGEDNQYICYVAYPLDLFEEGSVTNMFTSIVGNVFGFKALRALRLEDLRIPVAYIKTFQGPPHGIQVERDKLNKYGRPLLGCTIKPKLGLSAKNYGRAVYECLRGGLDFTKDDENVNSQPFMRWRDRFLFCAEAIYKAQAETGEIKGHYLNATAGTCEEMIKRAVFARELGVPIVMHDYLTGGFTANTSLALYCRDNGLLLHIHRAMHAVIDRQKNHGMHFRVLAKALRLSGGDHIHAGTVVGKLEGERDITLGFVDLLRDDYTEIDANRGIYFTQSWVSTPGVLPVASGGIHVWHMPALTEIFGDDSVLQFGGGTLGHPWGNAPGAVANRVALEACVQARNEGRDLARQGATIIRNASKWSPELAAACEVWKEIKFEFPAVDTLDKKKG</sequence>
<proteinExistence type="inferred from homology"/>
<name>RBL_SCHTR</name>
<reference key="1">
    <citation type="submission" date="1992-02" db="EMBL/GenBank/DDBJ databases">
        <title>Phylogeny of the Caryophyllales.</title>
        <authorList>
            <person name="Manhart J.R."/>
            <person name="Hugh J.H."/>
            <person name="Wilson D."/>
        </authorList>
    </citation>
    <scope>NUCLEOTIDE SEQUENCE [GENOMIC DNA]</scope>
</reference>
<accession>P25835</accession>
<comment type="function">
    <text evidence="1">RuBisCO catalyzes two reactions: the carboxylation of D-ribulose 1,5-bisphosphate, the primary event in carbon dioxide fixation, as well as the oxidative fragmentation of the pentose substrate in the photorespiration process. Both reactions occur simultaneously and in competition at the same active site.</text>
</comment>
<comment type="catalytic activity">
    <reaction evidence="1">
        <text>2 (2R)-3-phosphoglycerate + 2 H(+) = D-ribulose 1,5-bisphosphate + CO2 + H2O</text>
        <dbReference type="Rhea" id="RHEA:23124"/>
        <dbReference type="ChEBI" id="CHEBI:15377"/>
        <dbReference type="ChEBI" id="CHEBI:15378"/>
        <dbReference type="ChEBI" id="CHEBI:16526"/>
        <dbReference type="ChEBI" id="CHEBI:57870"/>
        <dbReference type="ChEBI" id="CHEBI:58272"/>
        <dbReference type="EC" id="4.1.1.39"/>
    </reaction>
</comment>
<comment type="catalytic activity">
    <reaction evidence="1">
        <text>D-ribulose 1,5-bisphosphate + O2 = 2-phosphoglycolate + (2R)-3-phosphoglycerate + 2 H(+)</text>
        <dbReference type="Rhea" id="RHEA:36631"/>
        <dbReference type="ChEBI" id="CHEBI:15378"/>
        <dbReference type="ChEBI" id="CHEBI:15379"/>
        <dbReference type="ChEBI" id="CHEBI:57870"/>
        <dbReference type="ChEBI" id="CHEBI:58033"/>
        <dbReference type="ChEBI" id="CHEBI:58272"/>
    </reaction>
</comment>
<comment type="cofactor">
    <cofactor evidence="1">
        <name>Mg(2+)</name>
        <dbReference type="ChEBI" id="CHEBI:18420"/>
    </cofactor>
    <text evidence="1">Binds 1 Mg(2+) ion per subunit.</text>
</comment>
<comment type="subunit">
    <text evidence="1">Heterohexadecamer of 8 large chains and 8 small chains; disulfide-linked. The disulfide link is formed within the large subunit homodimers.</text>
</comment>
<comment type="subcellular location">
    <subcellularLocation>
        <location>Plastid</location>
        <location>Chloroplast</location>
    </subcellularLocation>
</comment>
<comment type="PTM">
    <text evidence="1">The disulfide bond which can form in the large chain dimeric partners within the hexadecamer appears to be associated with oxidative stress and protein turnover.</text>
</comment>
<comment type="miscellaneous">
    <text evidence="1">The basic functional RuBisCO is composed of a large chain homodimer in a 'head-to-tail' conformation. In form I RuBisCO this homodimer is arranged in a barrel-like tetramer with the small subunits forming a tetrameric 'cap' on each end of the 'barrel'.</text>
</comment>
<comment type="similarity">
    <text evidence="1">Belongs to the RuBisCO large chain family. Type I subfamily.</text>
</comment>
<keyword id="KW-0113">Calvin cycle</keyword>
<keyword id="KW-0120">Carbon dioxide fixation</keyword>
<keyword id="KW-0150">Chloroplast</keyword>
<keyword id="KW-1015">Disulfide bond</keyword>
<keyword id="KW-0456">Lyase</keyword>
<keyword id="KW-0460">Magnesium</keyword>
<keyword id="KW-0479">Metal-binding</keyword>
<keyword id="KW-0488">Methylation</keyword>
<keyword id="KW-0503">Monooxygenase</keyword>
<keyword id="KW-0560">Oxidoreductase</keyword>
<keyword id="KW-0601">Photorespiration</keyword>
<keyword id="KW-0602">Photosynthesis</keyword>
<keyword id="KW-0934">Plastid</keyword>
<gene>
    <name evidence="1" type="primary">rbcL</name>
</gene>
<protein>
    <recommendedName>
        <fullName evidence="1">Ribulose bisphosphate carboxylase large chain</fullName>
        <shortName evidence="1">RuBisCO large subunit</shortName>
        <ecNumber evidence="1">4.1.1.39</ecNumber>
    </recommendedName>
</protein>
<dbReference type="EC" id="4.1.1.39" evidence="1"/>
<dbReference type="EMBL" id="M83543">
    <property type="protein sequence ID" value="AAB39337.1"/>
    <property type="molecule type" value="Genomic_DNA"/>
</dbReference>
<dbReference type="SMR" id="P25835"/>
<dbReference type="GO" id="GO:0009507">
    <property type="term" value="C:chloroplast"/>
    <property type="evidence" value="ECO:0007669"/>
    <property type="project" value="UniProtKB-SubCell"/>
</dbReference>
<dbReference type="GO" id="GO:0000287">
    <property type="term" value="F:magnesium ion binding"/>
    <property type="evidence" value="ECO:0007669"/>
    <property type="project" value="InterPro"/>
</dbReference>
<dbReference type="GO" id="GO:0004497">
    <property type="term" value="F:monooxygenase activity"/>
    <property type="evidence" value="ECO:0007669"/>
    <property type="project" value="UniProtKB-KW"/>
</dbReference>
<dbReference type="GO" id="GO:0016984">
    <property type="term" value="F:ribulose-bisphosphate carboxylase activity"/>
    <property type="evidence" value="ECO:0007669"/>
    <property type="project" value="UniProtKB-EC"/>
</dbReference>
<dbReference type="GO" id="GO:0009853">
    <property type="term" value="P:photorespiration"/>
    <property type="evidence" value="ECO:0007669"/>
    <property type="project" value="UniProtKB-KW"/>
</dbReference>
<dbReference type="GO" id="GO:0019253">
    <property type="term" value="P:reductive pentose-phosphate cycle"/>
    <property type="evidence" value="ECO:0007669"/>
    <property type="project" value="UniProtKB-KW"/>
</dbReference>
<dbReference type="CDD" id="cd08212">
    <property type="entry name" value="RuBisCO_large_I"/>
    <property type="match status" value="1"/>
</dbReference>
<dbReference type="FunFam" id="3.20.20.110:FF:000001">
    <property type="entry name" value="Ribulose bisphosphate carboxylase large chain"/>
    <property type="match status" value="1"/>
</dbReference>
<dbReference type="FunFam" id="3.30.70.150:FF:000001">
    <property type="entry name" value="Ribulose bisphosphate carboxylase large chain"/>
    <property type="match status" value="1"/>
</dbReference>
<dbReference type="Gene3D" id="3.20.20.110">
    <property type="entry name" value="Ribulose bisphosphate carboxylase, large subunit, C-terminal domain"/>
    <property type="match status" value="1"/>
</dbReference>
<dbReference type="Gene3D" id="3.30.70.150">
    <property type="entry name" value="RuBisCO large subunit, N-terminal domain"/>
    <property type="match status" value="1"/>
</dbReference>
<dbReference type="HAMAP" id="MF_01338">
    <property type="entry name" value="RuBisCO_L_type1"/>
    <property type="match status" value="1"/>
</dbReference>
<dbReference type="InterPro" id="IPR033966">
    <property type="entry name" value="RuBisCO"/>
</dbReference>
<dbReference type="InterPro" id="IPR020878">
    <property type="entry name" value="RuBisCo_large_chain_AS"/>
</dbReference>
<dbReference type="InterPro" id="IPR000685">
    <property type="entry name" value="RuBisCO_lsu_C"/>
</dbReference>
<dbReference type="InterPro" id="IPR036376">
    <property type="entry name" value="RuBisCO_lsu_C_sf"/>
</dbReference>
<dbReference type="InterPro" id="IPR017443">
    <property type="entry name" value="RuBisCO_lsu_fd_N"/>
</dbReference>
<dbReference type="InterPro" id="IPR036422">
    <property type="entry name" value="RuBisCO_lsu_N_sf"/>
</dbReference>
<dbReference type="InterPro" id="IPR020888">
    <property type="entry name" value="RuBisCO_lsuI"/>
</dbReference>
<dbReference type="NCBIfam" id="NF003252">
    <property type="entry name" value="PRK04208.1"/>
    <property type="match status" value="1"/>
</dbReference>
<dbReference type="PANTHER" id="PTHR42704">
    <property type="entry name" value="RIBULOSE BISPHOSPHATE CARBOXYLASE"/>
    <property type="match status" value="1"/>
</dbReference>
<dbReference type="PANTHER" id="PTHR42704:SF15">
    <property type="entry name" value="RIBULOSE BISPHOSPHATE CARBOXYLASE LARGE CHAIN"/>
    <property type="match status" value="1"/>
</dbReference>
<dbReference type="Pfam" id="PF00016">
    <property type="entry name" value="RuBisCO_large"/>
    <property type="match status" value="1"/>
</dbReference>
<dbReference type="Pfam" id="PF02788">
    <property type="entry name" value="RuBisCO_large_N"/>
    <property type="match status" value="1"/>
</dbReference>
<dbReference type="SFLD" id="SFLDG01052">
    <property type="entry name" value="RuBisCO"/>
    <property type="match status" value="1"/>
</dbReference>
<dbReference type="SFLD" id="SFLDS00014">
    <property type="entry name" value="RuBisCO"/>
    <property type="match status" value="1"/>
</dbReference>
<dbReference type="SFLD" id="SFLDG00301">
    <property type="entry name" value="RuBisCO-like_proteins"/>
    <property type="match status" value="1"/>
</dbReference>
<dbReference type="SUPFAM" id="SSF51649">
    <property type="entry name" value="RuBisCo, C-terminal domain"/>
    <property type="match status" value="1"/>
</dbReference>
<dbReference type="SUPFAM" id="SSF54966">
    <property type="entry name" value="RuBisCO, large subunit, small (N-terminal) domain"/>
    <property type="match status" value="1"/>
</dbReference>
<dbReference type="PROSITE" id="PS00157">
    <property type="entry name" value="RUBISCO_LARGE"/>
    <property type="match status" value="1"/>
</dbReference>